<dbReference type="EMBL" id="BC074287">
    <property type="protein sequence ID" value="AAH74287.1"/>
    <property type="status" value="ALT_INIT"/>
    <property type="molecule type" value="mRNA"/>
</dbReference>
<dbReference type="RefSeq" id="NP_001086172.1">
    <property type="nucleotide sequence ID" value="NM_001092703.1"/>
</dbReference>
<dbReference type="DNASU" id="444601"/>
<dbReference type="GeneID" id="444601"/>
<dbReference type="KEGG" id="xla:444601"/>
<dbReference type="AGR" id="Xenbase:XB-GENE-983944"/>
<dbReference type="CTD" id="444601"/>
<dbReference type="OMA" id="HNPSFVG"/>
<dbReference type="OrthoDB" id="10030083at2759"/>
<dbReference type="Proteomes" id="UP000186698">
    <property type="component" value="Chromosome 4L"/>
</dbReference>
<dbReference type="Bgee" id="444601">
    <property type="expression patterns" value="Expressed in brain and 2 other cell types or tissues"/>
</dbReference>
<dbReference type="GO" id="GO:0005886">
    <property type="term" value="C:plasma membrane"/>
    <property type="evidence" value="ECO:0000250"/>
    <property type="project" value="UniProtKB"/>
</dbReference>
<dbReference type="GO" id="GO:0008195">
    <property type="term" value="F:phosphatidate phosphatase activity"/>
    <property type="evidence" value="ECO:0000318"/>
    <property type="project" value="GO_Central"/>
</dbReference>
<dbReference type="GO" id="GO:0046839">
    <property type="term" value="P:phospholipid dephosphorylation"/>
    <property type="evidence" value="ECO:0000318"/>
    <property type="project" value="GO_Central"/>
</dbReference>
<dbReference type="GO" id="GO:0006644">
    <property type="term" value="P:phospholipid metabolic process"/>
    <property type="evidence" value="ECO:0000318"/>
    <property type="project" value="GO_Central"/>
</dbReference>
<dbReference type="GO" id="GO:0051491">
    <property type="term" value="P:positive regulation of filopodium assembly"/>
    <property type="evidence" value="ECO:0000250"/>
    <property type="project" value="UniProtKB"/>
</dbReference>
<dbReference type="GO" id="GO:0010976">
    <property type="term" value="P:positive regulation of neuron projection development"/>
    <property type="evidence" value="ECO:0000250"/>
    <property type="project" value="UniProtKB"/>
</dbReference>
<dbReference type="GO" id="GO:0007165">
    <property type="term" value="P:signal transduction"/>
    <property type="evidence" value="ECO:0000318"/>
    <property type="project" value="GO_Central"/>
</dbReference>
<dbReference type="CDD" id="cd03384">
    <property type="entry name" value="PAP2_wunen"/>
    <property type="match status" value="1"/>
</dbReference>
<dbReference type="FunFam" id="1.20.144.10:FF:000002">
    <property type="entry name" value="phospholipid phosphatase-related protein type 5"/>
    <property type="match status" value="1"/>
</dbReference>
<dbReference type="Gene3D" id="1.20.144.10">
    <property type="entry name" value="Phosphatidic acid phosphatase type 2/haloperoxidase"/>
    <property type="match status" value="1"/>
</dbReference>
<dbReference type="InterPro" id="IPR036938">
    <property type="entry name" value="P_Acid_Pase_2/haloperoxi_sf"/>
</dbReference>
<dbReference type="InterPro" id="IPR000326">
    <property type="entry name" value="P_Acid_Pase_2/haloperoxidase"/>
</dbReference>
<dbReference type="InterPro" id="IPR043216">
    <property type="entry name" value="PA_PP_rel"/>
</dbReference>
<dbReference type="PANTHER" id="PTHR10165">
    <property type="entry name" value="LIPID PHOSPHATE PHOSPHATASE"/>
    <property type="match status" value="1"/>
</dbReference>
<dbReference type="PANTHER" id="PTHR10165:SF17">
    <property type="entry name" value="PHOSPHOLIPID PHOSPHATASE-RELATED PROTEIN TYPE 5"/>
    <property type="match status" value="1"/>
</dbReference>
<dbReference type="Pfam" id="PF01569">
    <property type="entry name" value="PAP2"/>
    <property type="match status" value="1"/>
</dbReference>
<dbReference type="SMART" id="SM00014">
    <property type="entry name" value="acidPPc"/>
    <property type="match status" value="1"/>
</dbReference>
<dbReference type="SUPFAM" id="SSF48317">
    <property type="entry name" value="Acid phosphatase/Vanadium-dependent haloperoxidase"/>
    <property type="match status" value="1"/>
</dbReference>
<gene>
    <name evidence="1" type="primary">plppr5</name>
    <name type="synonym">lppr5</name>
</gene>
<protein>
    <recommendedName>
        <fullName evidence="1">Phospholipid phosphatase-related protein type 5</fullName>
    </recommendedName>
    <alternativeName>
        <fullName evidence="1">Lipid phosphate phosphatase-related protein type 5</fullName>
    </alternativeName>
</protein>
<sequence>MSFQFSLTIMLYFQMVIMAGTVMLAYYFEYTDTFTVNVQGFFCYDSSYTKPYPGPDESSDIPPVLLLSLVTGVPVLVIIVGETVVFCLQVATRDFENQEKTLLTGDCCYINPLVRRTVRFLGIYTFGLFATDIFVNAGQVVTGNLAPHFLTVCKPNYTALGCRQFTQFITDANACTGIPDLVIKARRTFPSKDAALSVYAALYLAMYITSTIKAKGTRLAKPVLCLGLMCLAFLTGINRVAEYRNHWSDVIAGFLIGISIAVFLVVCVVNNFKGRRTEHEHWPTENLAQMPIISIPRVENPLEKNHLTAFAEVT</sequence>
<accession>Q6GM05</accession>
<feature type="chain" id="PRO_0000321935" description="Phospholipid phosphatase-related protein type 5">
    <location>
        <begin position="1"/>
        <end position="314"/>
    </location>
</feature>
<feature type="transmembrane region" description="Helical" evidence="4">
    <location>
        <begin position="5"/>
        <end position="25"/>
    </location>
</feature>
<feature type="transmembrane region" description="Helical" evidence="4">
    <location>
        <begin position="61"/>
        <end position="81"/>
    </location>
</feature>
<feature type="transmembrane region" description="Helical" evidence="4">
    <location>
        <begin position="120"/>
        <end position="140"/>
    </location>
</feature>
<feature type="transmembrane region" description="Helical" evidence="4">
    <location>
        <begin position="194"/>
        <end position="214"/>
    </location>
</feature>
<feature type="transmembrane region" description="Helical" evidence="4">
    <location>
        <begin position="223"/>
        <end position="243"/>
    </location>
</feature>
<feature type="transmembrane region" description="Helical" evidence="4">
    <location>
        <begin position="250"/>
        <end position="270"/>
    </location>
</feature>
<evidence type="ECO:0000250" key="1">
    <source>
        <dbReference type="UniProtKB" id="Q32ZL2"/>
    </source>
</evidence>
<evidence type="ECO:0000250" key="2">
    <source>
        <dbReference type="UniProtKB" id="Q6WAY2"/>
    </source>
</evidence>
<evidence type="ECO:0000250" key="3">
    <source>
        <dbReference type="UniProtKB" id="Q8BJ52"/>
    </source>
</evidence>
<evidence type="ECO:0000255" key="4"/>
<evidence type="ECO:0000305" key="5"/>
<organism>
    <name type="scientific">Xenopus laevis</name>
    <name type="common">African clawed frog</name>
    <dbReference type="NCBI Taxonomy" id="8355"/>
    <lineage>
        <taxon>Eukaryota</taxon>
        <taxon>Metazoa</taxon>
        <taxon>Chordata</taxon>
        <taxon>Craniata</taxon>
        <taxon>Vertebrata</taxon>
        <taxon>Euteleostomi</taxon>
        <taxon>Amphibia</taxon>
        <taxon>Batrachia</taxon>
        <taxon>Anura</taxon>
        <taxon>Pipoidea</taxon>
        <taxon>Pipidae</taxon>
        <taxon>Xenopodinae</taxon>
        <taxon>Xenopus</taxon>
        <taxon>Xenopus</taxon>
    </lineage>
</organism>
<comment type="function">
    <text evidence="3">Induces filopodia formation and promotes neurite growth.</text>
</comment>
<comment type="subcellular location">
    <subcellularLocation>
        <location evidence="3">Cell membrane</location>
        <topology evidence="4">Multi-pass membrane protein</topology>
    </subcellularLocation>
</comment>
<comment type="similarity">
    <text evidence="5">Belongs to the PA-phosphatase related phosphoesterase family.</text>
</comment>
<comment type="caution">
    <text evidence="2 5">Has most probably no lipid phosphatase activity (By similarity). Critical residues that support the reaction mechanism in active members of that protein family, including the residues of the active site acting respectively as proton donor and nucleophile, are not conserved.</text>
</comment>
<comment type="sequence caution" evidence="5">
    <conflict type="erroneous initiation">
        <sequence resource="EMBL-CDS" id="AAH74287"/>
    </conflict>
</comment>
<name>PLPR5_XENLA</name>
<proteinExistence type="evidence at transcript level"/>
<reference key="1">
    <citation type="submission" date="2004-06" db="EMBL/GenBank/DDBJ databases">
        <authorList>
            <consortium name="NIH - Xenopus Gene Collection (XGC) project"/>
        </authorList>
    </citation>
    <scope>NUCLEOTIDE SEQUENCE [LARGE SCALE MRNA]</scope>
    <source>
        <tissue>Eye</tissue>
    </source>
</reference>
<keyword id="KW-1003">Cell membrane</keyword>
<keyword id="KW-0472">Membrane</keyword>
<keyword id="KW-1185">Reference proteome</keyword>
<keyword id="KW-0812">Transmembrane</keyword>
<keyword id="KW-1133">Transmembrane helix</keyword>